<keyword id="KW-0614">Plasmid</keyword>
<feature type="chain" id="PRO_0000263044" description="Uncharacterized protein YubB">
    <location>
        <begin position="1"/>
        <end position="145"/>
    </location>
</feature>
<dbReference type="EMBL" id="AF106329">
    <property type="protein sequence ID" value="AAD47176.1"/>
    <property type="molecule type" value="Genomic_DNA"/>
</dbReference>
<dbReference type="EMBL" id="AP001918">
    <property type="protein sequence ID" value="BAA97920.1"/>
    <property type="molecule type" value="Genomic_DNA"/>
</dbReference>
<dbReference type="RefSeq" id="NP_061429.1">
    <property type="nucleotide sequence ID" value="NC_002483.1"/>
</dbReference>
<dbReference type="SMR" id="Q9S4X4"/>
<dbReference type="Gene3D" id="3.30.70.1270">
    <property type="entry name" value="Api92-like domains"/>
    <property type="match status" value="1"/>
</dbReference>
<dbReference type="InterPro" id="IPR009694">
    <property type="entry name" value="DUF1281"/>
</dbReference>
<dbReference type="InterPro" id="IPR041329">
    <property type="entry name" value="YubB_C"/>
</dbReference>
<dbReference type="Pfam" id="PF06924">
    <property type="entry name" value="DUF1281"/>
    <property type="match status" value="1"/>
</dbReference>
<dbReference type="Pfam" id="PF18406">
    <property type="entry name" value="DUF1281_C"/>
    <property type="match status" value="1"/>
</dbReference>
<dbReference type="SUPFAM" id="SSF160940">
    <property type="entry name" value="Api92-like"/>
    <property type="match status" value="1"/>
</dbReference>
<name>YUBB_ECOLI</name>
<gene>
    <name type="primary">yubB</name>
    <name type="synonym">yfdA</name>
    <name type="ordered locus">ECOK12F050</name>
</gene>
<proteinExistence type="predicted"/>
<geneLocation type="plasmid">
    <name>F</name>
</geneLocation>
<organism>
    <name type="scientific">Escherichia coli (strain K12)</name>
    <dbReference type="NCBI Taxonomy" id="83333"/>
    <lineage>
        <taxon>Bacteria</taxon>
        <taxon>Pseudomonadati</taxon>
        <taxon>Pseudomonadota</taxon>
        <taxon>Gammaproteobacteria</taxon>
        <taxon>Enterobacterales</taxon>
        <taxon>Enterobacteriaceae</taxon>
        <taxon>Escherichia</taxon>
    </lineage>
</organism>
<sequence>MPFDLLTVLFTRLDVEVNGFNGGVLNGVPSAYHWYTEQYGVKGPCGYEVNISSQGDNFIQVDFDTPWCQPESDVIAVLSRRFSCTLEHWYAEQGCNFCGWQRYERGELVDVLWGELEWSSPTDDDELPEVTAPEWIVDKVAHYGG</sequence>
<protein>
    <recommendedName>
        <fullName>Uncharacterized protein YubB</fullName>
    </recommendedName>
</protein>
<accession>Q9S4X4</accession>
<accession>Q7AJQ7</accession>
<reference key="1">
    <citation type="journal article" date="1999" name="Plasmid">
        <title>Nucleotide sequence of the F plasmid leading region.</title>
        <authorList>
            <person name="Manwaring N.P."/>
            <person name="Skurray R.A."/>
            <person name="Firth N."/>
        </authorList>
    </citation>
    <scope>NUCLEOTIDE SEQUENCE [GENOMIC DNA]</scope>
</reference>
<reference key="2">
    <citation type="submission" date="2000-04" db="EMBL/GenBank/DDBJ databases">
        <title>Complete nucleotide sequence of the F plasmid: its implications for organization and diversification of plasmid genomes.</title>
        <authorList>
            <person name="Shimizu H."/>
            <person name="Saitoh Y."/>
            <person name="Suda Y."/>
            <person name="Uehara K."/>
            <person name="Sampei G."/>
            <person name="Mizobuchi K."/>
        </authorList>
    </citation>
    <scope>NUCLEOTIDE SEQUENCE [LARGE SCALE GENOMIC DNA]</scope>
    <source>
        <strain>K12 / CR63</strain>
    </source>
</reference>